<feature type="chain" id="PRO_1000053943" description="Uridylate kinase">
    <location>
        <begin position="1"/>
        <end position="238"/>
    </location>
</feature>
<feature type="region of interest" description="Involved in allosteric activation by GTP" evidence="1">
    <location>
        <begin position="20"/>
        <end position="25"/>
    </location>
</feature>
<feature type="binding site" evidence="1">
    <location>
        <begin position="12"/>
        <end position="15"/>
    </location>
    <ligand>
        <name>ATP</name>
        <dbReference type="ChEBI" id="CHEBI:30616"/>
    </ligand>
</feature>
<feature type="binding site" evidence="1">
    <location>
        <position position="54"/>
    </location>
    <ligand>
        <name>UMP</name>
        <dbReference type="ChEBI" id="CHEBI:57865"/>
    </ligand>
</feature>
<feature type="binding site" evidence="1">
    <location>
        <position position="55"/>
    </location>
    <ligand>
        <name>ATP</name>
        <dbReference type="ChEBI" id="CHEBI:30616"/>
    </ligand>
</feature>
<feature type="binding site" evidence="1">
    <location>
        <position position="59"/>
    </location>
    <ligand>
        <name>ATP</name>
        <dbReference type="ChEBI" id="CHEBI:30616"/>
    </ligand>
</feature>
<feature type="binding site" evidence="1">
    <location>
        <position position="74"/>
    </location>
    <ligand>
        <name>UMP</name>
        <dbReference type="ChEBI" id="CHEBI:57865"/>
    </ligand>
</feature>
<feature type="binding site" evidence="1">
    <location>
        <begin position="135"/>
        <end position="142"/>
    </location>
    <ligand>
        <name>UMP</name>
        <dbReference type="ChEBI" id="CHEBI:57865"/>
    </ligand>
</feature>
<feature type="binding site" evidence="1">
    <location>
        <position position="163"/>
    </location>
    <ligand>
        <name>ATP</name>
        <dbReference type="ChEBI" id="CHEBI:30616"/>
    </ligand>
</feature>
<feature type="binding site" evidence="1">
    <location>
        <position position="169"/>
    </location>
    <ligand>
        <name>ATP</name>
        <dbReference type="ChEBI" id="CHEBI:30616"/>
    </ligand>
</feature>
<feature type="binding site" evidence="1">
    <location>
        <position position="172"/>
    </location>
    <ligand>
        <name>ATP</name>
        <dbReference type="ChEBI" id="CHEBI:30616"/>
    </ligand>
</feature>
<keyword id="KW-0021">Allosteric enzyme</keyword>
<keyword id="KW-0067">ATP-binding</keyword>
<keyword id="KW-0963">Cytoplasm</keyword>
<keyword id="KW-0418">Kinase</keyword>
<keyword id="KW-0547">Nucleotide-binding</keyword>
<keyword id="KW-0665">Pyrimidine biosynthesis</keyword>
<keyword id="KW-0808">Transferase</keyword>
<organism>
    <name type="scientific">Lactococcus lactis subsp. cremoris (strain SK11)</name>
    <dbReference type="NCBI Taxonomy" id="272622"/>
    <lineage>
        <taxon>Bacteria</taxon>
        <taxon>Bacillati</taxon>
        <taxon>Bacillota</taxon>
        <taxon>Bacilli</taxon>
        <taxon>Lactobacillales</taxon>
        <taxon>Streptococcaceae</taxon>
        <taxon>Lactococcus</taxon>
        <taxon>Lactococcus cremoris subsp. cremoris</taxon>
    </lineage>
</organism>
<dbReference type="EC" id="2.7.4.22" evidence="1"/>
<dbReference type="EMBL" id="CP000425">
    <property type="protein sequence ID" value="ABJ73748.1"/>
    <property type="molecule type" value="Genomic_DNA"/>
</dbReference>
<dbReference type="RefSeq" id="WP_004254608.1">
    <property type="nucleotide sequence ID" value="NC_008527.1"/>
</dbReference>
<dbReference type="SMR" id="Q02WC4"/>
<dbReference type="GeneID" id="61110335"/>
<dbReference type="KEGG" id="llc:LACR_2292"/>
<dbReference type="HOGENOM" id="CLU_033861_0_0_9"/>
<dbReference type="UniPathway" id="UPA00159">
    <property type="reaction ID" value="UER00275"/>
</dbReference>
<dbReference type="Proteomes" id="UP000000240">
    <property type="component" value="Chromosome"/>
</dbReference>
<dbReference type="GO" id="GO:0005737">
    <property type="term" value="C:cytoplasm"/>
    <property type="evidence" value="ECO:0007669"/>
    <property type="project" value="UniProtKB-SubCell"/>
</dbReference>
<dbReference type="GO" id="GO:0005524">
    <property type="term" value="F:ATP binding"/>
    <property type="evidence" value="ECO:0007669"/>
    <property type="project" value="UniProtKB-KW"/>
</dbReference>
<dbReference type="GO" id="GO:0033862">
    <property type="term" value="F:UMP kinase activity"/>
    <property type="evidence" value="ECO:0007669"/>
    <property type="project" value="UniProtKB-EC"/>
</dbReference>
<dbReference type="GO" id="GO:0044210">
    <property type="term" value="P:'de novo' CTP biosynthetic process"/>
    <property type="evidence" value="ECO:0007669"/>
    <property type="project" value="UniProtKB-UniRule"/>
</dbReference>
<dbReference type="GO" id="GO:0006225">
    <property type="term" value="P:UDP biosynthetic process"/>
    <property type="evidence" value="ECO:0007669"/>
    <property type="project" value="TreeGrafter"/>
</dbReference>
<dbReference type="CDD" id="cd04254">
    <property type="entry name" value="AAK_UMPK-PyrH-Ec"/>
    <property type="match status" value="1"/>
</dbReference>
<dbReference type="FunFam" id="3.40.1160.10:FF:000001">
    <property type="entry name" value="Uridylate kinase"/>
    <property type="match status" value="1"/>
</dbReference>
<dbReference type="Gene3D" id="3.40.1160.10">
    <property type="entry name" value="Acetylglutamate kinase-like"/>
    <property type="match status" value="1"/>
</dbReference>
<dbReference type="HAMAP" id="MF_01220_B">
    <property type="entry name" value="PyrH_B"/>
    <property type="match status" value="1"/>
</dbReference>
<dbReference type="InterPro" id="IPR036393">
    <property type="entry name" value="AceGlu_kinase-like_sf"/>
</dbReference>
<dbReference type="InterPro" id="IPR001048">
    <property type="entry name" value="Asp/Glu/Uridylate_kinase"/>
</dbReference>
<dbReference type="InterPro" id="IPR011817">
    <property type="entry name" value="Uridylate_kinase"/>
</dbReference>
<dbReference type="InterPro" id="IPR015963">
    <property type="entry name" value="Uridylate_kinase_bac"/>
</dbReference>
<dbReference type="NCBIfam" id="TIGR02075">
    <property type="entry name" value="pyrH_bact"/>
    <property type="match status" value="1"/>
</dbReference>
<dbReference type="PANTHER" id="PTHR42833">
    <property type="entry name" value="URIDYLATE KINASE"/>
    <property type="match status" value="1"/>
</dbReference>
<dbReference type="PANTHER" id="PTHR42833:SF4">
    <property type="entry name" value="URIDYLATE KINASE PUMPKIN, CHLOROPLASTIC"/>
    <property type="match status" value="1"/>
</dbReference>
<dbReference type="Pfam" id="PF00696">
    <property type="entry name" value="AA_kinase"/>
    <property type="match status" value="1"/>
</dbReference>
<dbReference type="PIRSF" id="PIRSF005650">
    <property type="entry name" value="Uridylate_kin"/>
    <property type="match status" value="1"/>
</dbReference>
<dbReference type="SUPFAM" id="SSF53633">
    <property type="entry name" value="Carbamate kinase-like"/>
    <property type="match status" value="1"/>
</dbReference>
<evidence type="ECO:0000255" key="1">
    <source>
        <dbReference type="HAMAP-Rule" id="MF_01220"/>
    </source>
</evidence>
<accession>Q02WC4</accession>
<sequence length="238" mass="25677">MAEIKYKRVLLKLSGEALSGEKGFGFDPETAKAVAEELKEVHDLGAELAIVCGGGNVWRGVTGEKAGMERAQADYMGMLATIQNGLFIQSALENIGVDTRVMTAIEMKAVAEPYIRRRAERHLEKGRVVIFAGGTGSPYFSTDTTSALRAAEINADVILMAKNGVDGVYNADPKLVADAIKFEHLTHMDVITKGLQVMDSTASTMSMDNHIPLVVFNMNEAGNITRVVRGEEIGTTVE</sequence>
<reference key="1">
    <citation type="journal article" date="2006" name="Proc. Natl. Acad. Sci. U.S.A.">
        <title>Comparative genomics of the lactic acid bacteria.</title>
        <authorList>
            <person name="Makarova K.S."/>
            <person name="Slesarev A."/>
            <person name="Wolf Y.I."/>
            <person name="Sorokin A."/>
            <person name="Mirkin B."/>
            <person name="Koonin E.V."/>
            <person name="Pavlov A."/>
            <person name="Pavlova N."/>
            <person name="Karamychev V."/>
            <person name="Polouchine N."/>
            <person name="Shakhova V."/>
            <person name="Grigoriev I."/>
            <person name="Lou Y."/>
            <person name="Rohksar D."/>
            <person name="Lucas S."/>
            <person name="Huang K."/>
            <person name="Goodstein D.M."/>
            <person name="Hawkins T."/>
            <person name="Plengvidhya V."/>
            <person name="Welker D."/>
            <person name="Hughes J."/>
            <person name="Goh Y."/>
            <person name="Benson A."/>
            <person name="Baldwin K."/>
            <person name="Lee J.-H."/>
            <person name="Diaz-Muniz I."/>
            <person name="Dosti B."/>
            <person name="Smeianov V."/>
            <person name="Wechter W."/>
            <person name="Barabote R."/>
            <person name="Lorca G."/>
            <person name="Altermann E."/>
            <person name="Barrangou R."/>
            <person name="Ganesan B."/>
            <person name="Xie Y."/>
            <person name="Rawsthorne H."/>
            <person name="Tamir D."/>
            <person name="Parker C."/>
            <person name="Breidt F."/>
            <person name="Broadbent J.R."/>
            <person name="Hutkins R."/>
            <person name="O'Sullivan D."/>
            <person name="Steele J."/>
            <person name="Unlu G."/>
            <person name="Saier M.H. Jr."/>
            <person name="Klaenhammer T."/>
            <person name="Richardson P."/>
            <person name="Kozyavkin S."/>
            <person name="Weimer B.C."/>
            <person name="Mills D.A."/>
        </authorList>
    </citation>
    <scope>NUCLEOTIDE SEQUENCE [LARGE SCALE GENOMIC DNA]</scope>
    <source>
        <strain>SK11</strain>
    </source>
</reference>
<name>PYRH_LACLS</name>
<protein>
    <recommendedName>
        <fullName evidence="1">Uridylate kinase</fullName>
        <shortName evidence="1">UK</shortName>
        <ecNumber evidence="1">2.7.4.22</ecNumber>
    </recommendedName>
    <alternativeName>
        <fullName evidence="1">Uridine monophosphate kinase</fullName>
        <shortName evidence="1">UMP kinase</shortName>
        <shortName evidence="1">UMPK</shortName>
    </alternativeName>
</protein>
<proteinExistence type="inferred from homology"/>
<gene>
    <name evidence="1" type="primary">pyrH</name>
    <name type="ordered locus">LACR_2292</name>
</gene>
<comment type="function">
    <text evidence="1">Catalyzes the reversible phosphorylation of UMP to UDP.</text>
</comment>
<comment type="catalytic activity">
    <reaction evidence="1">
        <text>UMP + ATP = UDP + ADP</text>
        <dbReference type="Rhea" id="RHEA:24400"/>
        <dbReference type="ChEBI" id="CHEBI:30616"/>
        <dbReference type="ChEBI" id="CHEBI:57865"/>
        <dbReference type="ChEBI" id="CHEBI:58223"/>
        <dbReference type="ChEBI" id="CHEBI:456216"/>
        <dbReference type="EC" id="2.7.4.22"/>
    </reaction>
</comment>
<comment type="activity regulation">
    <text evidence="1">Allosterically activated by GTP. Inhibited by UTP.</text>
</comment>
<comment type="pathway">
    <text evidence="1">Pyrimidine metabolism; CTP biosynthesis via de novo pathway; UDP from UMP (UMPK route): step 1/1.</text>
</comment>
<comment type="subunit">
    <text evidence="1">Homohexamer.</text>
</comment>
<comment type="subcellular location">
    <subcellularLocation>
        <location evidence="1">Cytoplasm</location>
    </subcellularLocation>
</comment>
<comment type="similarity">
    <text evidence="1">Belongs to the UMP kinase family.</text>
</comment>